<dbReference type="EMBL" id="BA000045">
    <property type="protein sequence ID" value="BAC90980.1"/>
    <property type="molecule type" value="Genomic_DNA"/>
</dbReference>
<dbReference type="RefSeq" id="NP_925985.1">
    <property type="nucleotide sequence ID" value="NC_005125.1"/>
</dbReference>
<dbReference type="RefSeq" id="WP_011143032.1">
    <property type="nucleotide sequence ID" value="NC_005125.1"/>
</dbReference>
<dbReference type="SMR" id="Q7NCE0"/>
<dbReference type="STRING" id="251221.gene:10760544"/>
<dbReference type="EnsemblBacteria" id="BAC90980">
    <property type="protein sequence ID" value="BAC90980"/>
    <property type="gene ID" value="BAC90980"/>
</dbReference>
<dbReference type="KEGG" id="gvi:glr3039"/>
<dbReference type="PATRIC" id="fig|251221.4.peg.3069"/>
<dbReference type="eggNOG" id="COG3258">
    <property type="taxonomic scope" value="Bacteria"/>
</dbReference>
<dbReference type="HOGENOM" id="CLU_033498_0_0_3"/>
<dbReference type="InParanoid" id="Q7NCE0"/>
<dbReference type="OrthoDB" id="581091at2"/>
<dbReference type="PhylomeDB" id="Q7NCE0"/>
<dbReference type="Proteomes" id="UP000000557">
    <property type="component" value="Chromosome"/>
</dbReference>
<dbReference type="GO" id="GO:0005886">
    <property type="term" value="C:plasma membrane"/>
    <property type="evidence" value="ECO:0007669"/>
    <property type="project" value="UniProtKB-SubCell"/>
</dbReference>
<dbReference type="GO" id="GO:0042651">
    <property type="term" value="C:thylakoid membrane"/>
    <property type="evidence" value="ECO:0007669"/>
    <property type="project" value="InterPro"/>
</dbReference>
<dbReference type="GO" id="GO:0009055">
    <property type="term" value="F:electron transfer activity"/>
    <property type="evidence" value="ECO:0007669"/>
    <property type="project" value="InterPro"/>
</dbReference>
<dbReference type="GO" id="GO:0020037">
    <property type="term" value="F:heme binding"/>
    <property type="evidence" value="ECO:0007669"/>
    <property type="project" value="InterPro"/>
</dbReference>
<dbReference type="GO" id="GO:0005506">
    <property type="term" value="F:iron ion binding"/>
    <property type="evidence" value="ECO:0007669"/>
    <property type="project" value="InterPro"/>
</dbReference>
<dbReference type="GO" id="GO:0015979">
    <property type="term" value="P:photosynthesis"/>
    <property type="evidence" value="ECO:0007669"/>
    <property type="project" value="UniProtKB-KW"/>
</dbReference>
<dbReference type="Gene3D" id="2.40.50.100">
    <property type="match status" value="1"/>
</dbReference>
<dbReference type="Gene3D" id="2.60.40.830">
    <property type="entry name" value="Cytochrome f large domain"/>
    <property type="match status" value="1"/>
</dbReference>
<dbReference type="Gene3D" id="1.20.5.700">
    <property type="entry name" value="Single helix bin"/>
    <property type="match status" value="1"/>
</dbReference>
<dbReference type="InterPro" id="IPR024058">
    <property type="entry name" value="Cyt-f_TM"/>
</dbReference>
<dbReference type="InterPro" id="IPR002325">
    <property type="entry name" value="Cyt_f"/>
</dbReference>
<dbReference type="InterPro" id="IPR024094">
    <property type="entry name" value="Cyt_f_lg_dom"/>
</dbReference>
<dbReference type="InterPro" id="IPR036826">
    <property type="entry name" value="Cyt_f_lg_dom_sf"/>
</dbReference>
<dbReference type="InterPro" id="IPR011054">
    <property type="entry name" value="Rudment_hybrid_motif"/>
</dbReference>
<dbReference type="PANTHER" id="PTHR33288">
    <property type="match status" value="1"/>
</dbReference>
<dbReference type="PANTHER" id="PTHR33288:SF4">
    <property type="entry name" value="PHOTOSYSTEM I ASSEMBLY PROTEIN YCF4"/>
    <property type="match status" value="1"/>
</dbReference>
<dbReference type="Pfam" id="PF01333">
    <property type="entry name" value="Apocytochr_F_C"/>
    <property type="match status" value="1"/>
</dbReference>
<dbReference type="Pfam" id="PF16639">
    <property type="entry name" value="Apocytochr_F_N"/>
    <property type="match status" value="1"/>
</dbReference>
<dbReference type="PRINTS" id="PR00610">
    <property type="entry name" value="CYTOCHROMEF"/>
</dbReference>
<dbReference type="SUPFAM" id="SSF103431">
    <property type="entry name" value="Cytochrome f subunit of the cytochrome b6f complex, transmembrane anchor"/>
    <property type="match status" value="1"/>
</dbReference>
<dbReference type="SUPFAM" id="SSF49441">
    <property type="entry name" value="Cytochrome f, large domain"/>
    <property type="match status" value="1"/>
</dbReference>
<dbReference type="SUPFAM" id="SSF51246">
    <property type="entry name" value="Rudiment single hybrid motif"/>
    <property type="match status" value="1"/>
</dbReference>
<dbReference type="PROSITE" id="PS51010">
    <property type="entry name" value="CYTF"/>
    <property type="match status" value="1"/>
</dbReference>
<sequence length="342" mass="36650">MKKQWIAGAFGLTAALAGLVSVPQSALAWPSFAAGYEEARESSGKIVCANCHLAVKPTEIEVPQSVLPGKVFDLKIHVPYDTKIQQVGADGSPAPMQIGAYIQLPEGFTVADEKEWSAEAKESIEKYGGVTPLYADKPERSNILIINQIDGSTVPGQEFIVPVKPPDPNAKDAKVNFGKYGVYVGANRGRGQVYSNGVASNTAQYNAPVAGTISAVQTGVTFTDKLQYGLGTEATDFEYTNGTRVTITDEKGKASIVNIPPGPKLLDTVKQGAQIKAGQPLTNDPNVGGYGQEERDIVLQDPQRVTWLVAFLAAAFICQLLLVLKKKQVEKVQEFEAQKQGL</sequence>
<feature type="signal peptide" evidence="2">
    <location>
        <begin position="1"/>
        <end position="28"/>
    </location>
</feature>
<feature type="chain" id="PRO_0000342027" description="Cytochrome f">
    <location>
        <begin position="29"/>
        <end position="342"/>
    </location>
</feature>
<feature type="transmembrane region" description="Helical" evidence="2">
    <location>
        <begin position="305"/>
        <end position="325"/>
    </location>
</feature>
<feature type="binding site" description="covalent" evidence="2">
    <location>
        <position position="48"/>
    </location>
    <ligand>
        <name>heme</name>
        <dbReference type="ChEBI" id="CHEBI:30413"/>
    </ligand>
</feature>
<feature type="binding site" description="covalent" evidence="2">
    <location>
        <position position="51"/>
    </location>
    <ligand>
        <name>heme</name>
        <dbReference type="ChEBI" id="CHEBI:30413"/>
    </ligand>
</feature>
<feature type="binding site" description="axial binding residue" evidence="2">
    <location>
        <position position="52"/>
    </location>
    <ligand>
        <name>heme</name>
        <dbReference type="ChEBI" id="CHEBI:30413"/>
    </ligand>
    <ligandPart>
        <name>Fe</name>
        <dbReference type="ChEBI" id="CHEBI:18248"/>
    </ligandPart>
</feature>
<comment type="function">
    <text evidence="1">Component of the cytochrome b6-f complex, which mediates electron transfer between photosystem II (PSII) and photosystem I (PSI), cyclic electron flow around PSI, and state transitions.</text>
</comment>
<comment type="cofactor">
    <cofactor evidence="3">
        <name>heme</name>
        <dbReference type="ChEBI" id="CHEBI:30413"/>
    </cofactor>
    <text evidence="3">Binds 1 heme group covalently.</text>
</comment>
<comment type="subunit">
    <text evidence="1">The 4 large subunits of the cytochrome b6-f complex are cytochrome b6, subunit IV (17 kDa polypeptide, PetD), cytochrome f and the Rieske protein, while the 4 small subunits are PetG, PetL, PetM and PetN. The complex functions as a dimer (By similarity).</text>
</comment>
<comment type="subcellular location">
    <subcellularLocation>
        <location evidence="1">Cell inner membrane</location>
        <topology evidence="1">Single-pass membrane protein</topology>
    </subcellularLocation>
</comment>
<comment type="similarity">
    <text evidence="3">Belongs to the cytochrome f family.</text>
</comment>
<comment type="caution">
    <text evidence="3">Lacks the conserved Tyr/Phe in position 29 necessary for binding heme.</text>
</comment>
<protein>
    <recommendedName>
        <fullName>Cytochrome f</fullName>
    </recommendedName>
</protein>
<gene>
    <name type="primary">petA</name>
    <name type="ordered locus">glr3039</name>
</gene>
<proteinExistence type="inferred from homology"/>
<reference key="1">
    <citation type="journal article" date="2003" name="DNA Res.">
        <title>Complete genome structure of Gloeobacter violaceus PCC 7421, a cyanobacterium that lacks thylakoids.</title>
        <authorList>
            <person name="Nakamura Y."/>
            <person name="Kaneko T."/>
            <person name="Sato S."/>
            <person name="Mimuro M."/>
            <person name="Miyashita H."/>
            <person name="Tsuchiya T."/>
            <person name="Sasamoto S."/>
            <person name="Watanabe A."/>
            <person name="Kawashima K."/>
            <person name="Kishida Y."/>
            <person name="Kiyokawa C."/>
            <person name="Kohara M."/>
            <person name="Matsumoto M."/>
            <person name="Matsuno A."/>
            <person name="Nakazaki N."/>
            <person name="Shimpo S."/>
            <person name="Takeuchi C."/>
            <person name="Yamada M."/>
            <person name="Tabata S."/>
        </authorList>
    </citation>
    <scope>NUCLEOTIDE SEQUENCE [LARGE SCALE GENOMIC DNA]</scope>
    <source>
        <strain>ATCC 29082 / PCC 7421</strain>
    </source>
</reference>
<name>CYF_GLOVI</name>
<evidence type="ECO:0000250" key="1"/>
<evidence type="ECO:0000255" key="2"/>
<evidence type="ECO:0000305" key="3"/>
<accession>Q7NCE0</accession>
<organism>
    <name type="scientific">Gloeobacter violaceus (strain ATCC 29082 / PCC 7421)</name>
    <dbReference type="NCBI Taxonomy" id="251221"/>
    <lineage>
        <taxon>Bacteria</taxon>
        <taxon>Bacillati</taxon>
        <taxon>Cyanobacteriota</taxon>
        <taxon>Cyanophyceae</taxon>
        <taxon>Gloeobacterales</taxon>
        <taxon>Gloeobacteraceae</taxon>
        <taxon>Gloeobacter</taxon>
    </lineage>
</organism>
<keyword id="KW-0997">Cell inner membrane</keyword>
<keyword id="KW-1003">Cell membrane</keyword>
<keyword id="KW-0249">Electron transport</keyword>
<keyword id="KW-0349">Heme</keyword>
<keyword id="KW-0408">Iron</keyword>
<keyword id="KW-0472">Membrane</keyword>
<keyword id="KW-0479">Metal-binding</keyword>
<keyword id="KW-0602">Photosynthesis</keyword>
<keyword id="KW-1185">Reference proteome</keyword>
<keyword id="KW-0732">Signal</keyword>
<keyword id="KW-0812">Transmembrane</keyword>
<keyword id="KW-1133">Transmembrane helix</keyword>
<keyword id="KW-0813">Transport</keyword>